<dbReference type="EMBL" id="AM040264">
    <property type="protein sequence ID" value="CAJ10361.1"/>
    <property type="molecule type" value="Genomic_DNA"/>
</dbReference>
<dbReference type="RefSeq" id="WP_002963539.1">
    <property type="nucleotide sequence ID" value="NZ_KN046823.1"/>
</dbReference>
<dbReference type="SMR" id="Q2YM98"/>
<dbReference type="STRING" id="359391.BAB1_0405"/>
<dbReference type="GeneID" id="93017164"/>
<dbReference type="KEGG" id="bmf:BAB1_0405"/>
<dbReference type="PATRIC" id="fig|359391.11.peg.2451"/>
<dbReference type="HOGENOM" id="CLU_016077_5_0_5"/>
<dbReference type="PhylomeDB" id="Q2YM98"/>
<dbReference type="Proteomes" id="UP000002719">
    <property type="component" value="Chromosome I"/>
</dbReference>
<dbReference type="GO" id="GO:0005525">
    <property type="term" value="F:GTP binding"/>
    <property type="evidence" value="ECO:0007669"/>
    <property type="project" value="UniProtKB-UniRule"/>
</dbReference>
<dbReference type="GO" id="GO:0042254">
    <property type="term" value="P:ribosome biogenesis"/>
    <property type="evidence" value="ECO:0007669"/>
    <property type="project" value="UniProtKB-KW"/>
</dbReference>
<dbReference type="CDD" id="cd01894">
    <property type="entry name" value="EngA1"/>
    <property type="match status" value="1"/>
</dbReference>
<dbReference type="CDD" id="cd01895">
    <property type="entry name" value="EngA2"/>
    <property type="match status" value="1"/>
</dbReference>
<dbReference type="FunFam" id="3.30.300.20:FF:000004">
    <property type="entry name" value="GTPase Der"/>
    <property type="match status" value="1"/>
</dbReference>
<dbReference type="FunFam" id="3.40.50.300:FF:000057">
    <property type="entry name" value="GTPase Der"/>
    <property type="match status" value="1"/>
</dbReference>
<dbReference type="Gene3D" id="3.30.300.20">
    <property type="match status" value="1"/>
</dbReference>
<dbReference type="Gene3D" id="3.40.50.300">
    <property type="entry name" value="P-loop containing nucleotide triphosphate hydrolases"/>
    <property type="match status" value="2"/>
</dbReference>
<dbReference type="HAMAP" id="MF_00195">
    <property type="entry name" value="GTPase_Der"/>
    <property type="match status" value="1"/>
</dbReference>
<dbReference type="InterPro" id="IPR031166">
    <property type="entry name" value="G_ENGA"/>
</dbReference>
<dbReference type="InterPro" id="IPR006073">
    <property type="entry name" value="GTP-bd"/>
</dbReference>
<dbReference type="InterPro" id="IPR016484">
    <property type="entry name" value="GTPase_Der"/>
</dbReference>
<dbReference type="InterPro" id="IPR032859">
    <property type="entry name" value="KH_dom-like"/>
</dbReference>
<dbReference type="InterPro" id="IPR015946">
    <property type="entry name" value="KH_dom-like_a/b"/>
</dbReference>
<dbReference type="InterPro" id="IPR027417">
    <property type="entry name" value="P-loop_NTPase"/>
</dbReference>
<dbReference type="InterPro" id="IPR005225">
    <property type="entry name" value="Small_GTP-bd"/>
</dbReference>
<dbReference type="NCBIfam" id="TIGR03594">
    <property type="entry name" value="GTPase_EngA"/>
    <property type="match status" value="1"/>
</dbReference>
<dbReference type="NCBIfam" id="TIGR00231">
    <property type="entry name" value="small_GTP"/>
    <property type="match status" value="2"/>
</dbReference>
<dbReference type="PANTHER" id="PTHR43834">
    <property type="entry name" value="GTPASE DER"/>
    <property type="match status" value="1"/>
</dbReference>
<dbReference type="PANTHER" id="PTHR43834:SF6">
    <property type="entry name" value="GTPASE DER"/>
    <property type="match status" value="1"/>
</dbReference>
<dbReference type="Pfam" id="PF14714">
    <property type="entry name" value="KH_dom-like"/>
    <property type="match status" value="1"/>
</dbReference>
<dbReference type="Pfam" id="PF01926">
    <property type="entry name" value="MMR_HSR1"/>
    <property type="match status" value="2"/>
</dbReference>
<dbReference type="PIRSF" id="PIRSF006485">
    <property type="entry name" value="GTP-binding_EngA"/>
    <property type="match status" value="1"/>
</dbReference>
<dbReference type="PRINTS" id="PR00326">
    <property type="entry name" value="GTP1OBG"/>
</dbReference>
<dbReference type="SUPFAM" id="SSF52540">
    <property type="entry name" value="P-loop containing nucleoside triphosphate hydrolases"/>
    <property type="match status" value="2"/>
</dbReference>
<dbReference type="PROSITE" id="PS51712">
    <property type="entry name" value="G_ENGA"/>
    <property type="match status" value="2"/>
</dbReference>
<gene>
    <name evidence="1" type="primary">der</name>
    <name type="synonym">engA</name>
    <name type="ordered locus">BAB1_0405</name>
</gene>
<comment type="function">
    <text evidence="1">GTPase that plays an essential role in the late steps of ribosome biogenesis.</text>
</comment>
<comment type="subunit">
    <text evidence="1">Associates with the 50S ribosomal subunit.</text>
</comment>
<comment type="similarity">
    <text evidence="1">Belongs to the TRAFAC class TrmE-Era-EngA-EngB-Septin-like GTPase superfamily. EngA (Der) GTPase family.</text>
</comment>
<keyword id="KW-0342">GTP-binding</keyword>
<keyword id="KW-0547">Nucleotide-binding</keyword>
<keyword id="KW-1185">Reference proteome</keyword>
<keyword id="KW-0677">Repeat</keyword>
<keyword id="KW-0690">Ribosome biogenesis</keyword>
<accession>Q2YM98</accession>
<protein>
    <recommendedName>
        <fullName evidence="1">GTPase Der</fullName>
    </recommendedName>
    <alternativeName>
        <fullName evidence="1">GTP-binding protein EngA</fullName>
    </alternativeName>
</protein>
<feature type="chain" id="PRO_1000011575" description="GTPase Der">
    <location>
        <begin position="1"/>
        <end position="483"/>
    </location>
</feature>
<feature type="domain" description="EngA-type G 1">
    <location>
        <begin position="3"/>
        <end position="167"/>
    </location>
</feature>
<feature type="domain" description="EngA-type G 2">
    <location>
        <begin position="212"/>
        <end position="387"/>
    </location>
</feature>
<feature type="domain" description="KH-like" evidence="1">
    <location>
        <begin position="388"/>
        <end position="472"/>
    </location>
</feature>
<feature type="binding site" evidence="1">
    <location>
        <begin position="9"/>
        <end position="16"/>
    </location>
    <ligand>
        <name>GTP</name>
        <dbReference type="ChEBI" id="CHEBI:37565"/>
        <label>1</label>
    </ligand>
</feature>
<feature type="binding site" evidence="1">
    <location>
        <begin position="56"/>
        <end position="60"/>
    </location>
    <ligand>
        <name>GTP</name>
        <dbReference type="ChEBI" id="CHEBI:37565"/>
        <label>1</label>
    </ligand>
</feature>
<feature type="binding site" evidence="1">
    <location>
        <begin position="119"/>
        <end position="122"/>
    </location>
    <ligand>
        <name>GTP</name>
        <dbReference type="ChEBI" id="CHEBI:37565"/>
        <label>1</label>
    </ligand>
</feature>
<feature type="binding site" evidence="1">
    <location>
        <begin position="218"/>
        <end position="225"/>
    </location>
    <ligand>
        <name>GTP</name>
        <dbReference type="ChEBI" id="CHEBI:37565"/>
        <label>2</label>
    </ligand>
</feature>
<feature type="binding site" evidence="1">
    <location>
        <begin position="265"/>
        <end position="269"/>
    </location>
    <ligand>
        <name>GTP</name>
        <dbReference type="ChEBI" id="CHEBI:37565"/>
        <label>2</label>
    </ligand>
</feature>
<feature type="binding site" evidence="1">
    <location>
        <begin position="330"/>
        <end position="333"/>
    </location>
    <ligand>
        <name>GTP</name>
        <dbReference type="ChEBI" id="CHEBI:37565"/>
        <label>2</label>
    </ligand>
</feature>
<proteinExistence type="inferred from homology"/>
<evidence type="ECO:0000255" key="1">
    <source>
        <dbReference type="HAMAP-Rule" id="MF_00195"/>
    </source>
</evidence>
<reference key="1">
    <citation type="journal article" date="2005" name="Infect. Immun.">
        <title>Whole-genome analyses of speciation events in pathogenic Brucellae.</title>
        <authorList>
            <person name="Chain P.S."/>
            <person name="Comerci D.J."/>
            <person name="Tolmasky M.E."/>
            <person name="Larimer F.W."/>
            <person name="Malfatti S.A."/>
            <person name="Vergez L.M."/>
            <person name="Aguero F."/>
            <person name="Land M.L."/>
            <person name="Ugalde R.A."/>
            <person name="Garcia E."/>
        </authorList>
    </citation>
    <scope>NUCLEOTIDE SEQUENCE [LARGE SCALE GENOMIC DNA]</scope>
    <source>
        <strain>2308</strain>
    </source>
</reference>
<organism>
    <name type="scientific">Brucella abortus (strain 2308)</name>
    <dbReference type="NCBI Taxonomy" id="359391"/>
    <lineage>
        <taxon>Bacteria</taxon>
        <taxon>Pseudomonadati</taxon>
        <taxon>Pseudomonadota</taxon>
        <taxon>Alphaproteobacteria</taxon>
        <taxon>Hyphomicrobiales</taxon>
        <taxon>Brucellaceae</taxon>
        <taxon>Brucella/Ochrobactrum group</taxon>
        <taxon>Brucella</taxon>
    </lineage>
</organism>
<sequence>MGFTLAIVGRPNVGKSTLFNRLVGRKLALVDDLPGVTRDRRIHDAKLYDLKFQVIDTAGLEEAANDSLEARMRAQTEAAISEADAVLFVIDAKAGITPADSTFAEAVRRSGKPVVLVANKAEARGSEAGMYDAFQLGLGEPCPISAEHGQGMPDLRDAIVELLGEERVFAEERQEEAADEVFTPAAVGALVGDDIEDPDAEEIPAYDATKPLRIAIVGRPNAGKSTLINTMLGEDRLLTGPEAGITRDSISADWEWHGRKINLFDTAGMRRKARVQEKLEKLSVADSLRAIRFAEVVIIVLDATIPFEKQDLQIADLIIREGRAPVIAFNKWDLIEDRQMVLADLYEKTARLLPQVRGLRAVPISGERGQGIDKLMENVVKTHEIWNRRISTGRLNRWLEGVIAHQPPPAVSGRRLKVKYMTQVKTRPPGFVVSCSRPDAMPQSYVRYLINGLRETFDMPGVPIRLSLRTSDNPFAGRAKKKK</sequence>
<name>DER_BRUA2</name>